<keyword id="KW-0067">ATP-binding</keyword>
<keyword id="KW-1003">Cell membrane</keyword>
<keyword id="KW-0963">Cytoplasm</keyword>
<keyword id="KW-0472">Membrane</keyword>
<keyword id="KW-0547">Nucleotide-binding</keyword>
<keyword id="KW-0653">Protein transport</keyword>
<keyword id="KW-1278">Translocase</keyword>
<keyword id="KW-0811">Translocation</keyword>
<keyword id="KW-0813">Transport</keyword>
<dbReference type="EC" id="7.4.2.8" evidence="1"/>
<dbReference type="EMBL" id="CP000580">
    <property type="protein sequence ID" value="ABN98660.1"/>
    <property type="molecule type" value="Genomic_DNA"/>
</dbReference>
<dbReference type="SMR" id="A3Q0I3"/>
<dbReference type="KEGG" id="mjl:Mjls_2881"/>
<dbReference type="HOGENOM" id="CLU_005314_3_2_11"/>
<dbReference type="BioCyc" id="MSP164757:G1G8C-2899-MONOMER"/>
<dbReference type="GO" id="GO:0031522">
    <property type="term" value="C:cell envelope Sec protein transport complex"/>
    <property type="evidence" value="ECO:0007669"/>
    <property type="project" value="TreeGrafter"/>
</dbReference>
<dbReference type="GO" id="GO:0005829">
    <property type="term" value="C:cytosol"/>
    <property type="evidence" value="ECO:0007669"/>
    <property type="project" value="TreeGrafter"/>
</dbReference>
<dbReference type="GO" id="GO:0005886">
    <property type="term" value="C:plasma membrane"/>
    <property type="evidence" value="ECO:0007669"/>
    <property type="project" value="UniProtKB-SubCell"/>
</dbReference>
<dbReference type="GO" id="GO:0005524">
    <property type="term" value="F:ATP binding"/>
    <property type="evidence" value="ECO:0007669"/>
    <property type="project" value="UniProtKB-UniRule"/>
</dbReference>
<dbReference type="GO" id="GO:0008564">
    <property type="term" value="F:protein-exporting ATPase activity"/>
    <property type="evidence" value="ECO:0007669"/>
    <property type="project" value="UniProtKB-EC"/>
</dbReference>
<dbReference type="GO" id="GO:0065002">
    <property type="term" value="P:intracellular protein transmembrane transport"/>
    <property type="evidence" value="ECO:0007669"/>
    <property type="project" value="UniProtKB-UniRule"/>
</dbReference>
<dbReference type="GO" id="GO:0017038">
    <property type="term" value="P:protein import"/>
    <property type="evidence" value="ECO:0007669"/>
    <property type="project" value="InterPro"/>
</dbReference>
<dbReference type="GO" id="GO:0006605">
    <property type="term" value="P:protein targeting"/>
    <property type="evidence" value="ECO:0007669"/>
    <property type="project" value="UniProtKB-UniRule"/>
</dbReference>
<dbReference type="GO" id="GO:0043952">
    <property type="term" value="P:protein transport by the Sec complex"/>
    <property type="evidence" value="ECO:0007669"/>
    <property type="project" value="TreeGrafter"/>
</dbReference>
<dbReference type="CDD" id="cd17928">
    <property type="entry name" value="DEXDc_SecA"/>
    <property type="match status" value="1"/>
</dbReference>
<dbReference type="CDD" id="cd18803">
    <property type="entry name" value="SF2_C_secA"/>
    <property type="match status" value="1"/>
</dbReference>
<dbReference type="FunFam" id="3.40.50.300:FF:000429">
    <property type="entry name" value="Preprotein translocase subunit SecA"/>
    <property type="match status" value="1"/>
</dbReference>
<dbReference type="Gene3D" id="1.10.3060.10">
    <property type="entry name" value="Helical scaffold and wing domains of SecA"/>
    <property type="match status" value="1"/>
</dbReference>
<dbReference type="Gene3D" id="3.40.50.300">
    <property type="entry name" value="P-loop containing nucleotide triphosphate hydrolases"/>
    <property type="match status" value="3"/>
</dbReference>
<dbReference type="Gene3D" id="3.90.1440.10">
    <property type="entry name" value="SecA, preprotein cross-linking domain"/>
    <property type="match status" value="1"/>
</dbReference>
<dbReference type="HAMAP" id="MF_01382">
    <property type="entry name" value="SecA"/>
    <property type="match status" value="1"/>
</dbReference>
<dbReference type="InterPro" id="IPR014001">
    <property type="entry name" value="Helicase_ATP-bd"/>
</dbReference>
<dbReference type="InterPro" id="IPR001650">
    <property type="entry name" value="Helicase_C-like"/>
</dbReference>
<dbReference type="InterPro" id="IPR027417">
    <property type="entry name" value="P-loop_NTPase"/>
</dbReference>
<dbReference type="InterPro" id="IPR000185">
    <property type="entry name" value="SecA"/>
</dbReference>
<dbReference type="InterPro" id="IPR026389">
    <property type="entry name" value="SecA_Actinobact-type"/>
</dbReference>
<dbReference type="InterPro" id="IPR020937">
    <property type="entry name" value="SecA_CS"/>
</dbReference>
<dbReference type="InterPro" id="IPR011115">
    <property type="entry name" value="SecA_DEAD"/>
</dbReference>
<dbReference type="InterPro" id="IPR014018">
    <property type="entry name" value="SecA_motor_DEAD"/>
</dbReference>
<dbReference type="InterPro" id="IPR011130">
    <property type="entry name" value="SecA_preprotein_X-link_dom"/>
</dbReference>
<dbReference type="InterPro" id="IPR044722">
    <property type="entry name" value="SecA_SF2_C"/>
</dbReference>
<dbReference type="InterPro" id="IPR011116">
    <property type="entry name" value="SecA_Wing/Scaffold"/>
</dbReference>
<dbReference type="InterPro" id="IPR036266">
    <property type="entry name" value="SecA_Wing/Scaffold_sf"/>
</dbReference>
<dbReference type="InterPro" id="IPR036670">
    <property type="entry name" value="SecA_X-link_sf"/>
</dbReference>
<dbReference type="NCBIfam" id="TIGR04221">
    <property type="entry name" value="SecA2_Mycobac"/>
    <property type="match status" value="1"/>
</dbReference>
<dbReference type="PANTHER" id="PTHR30612:SF0">
    <property type="entry name" value="CHLOROPLAST PROTEIN-TRANSPORTING ATPASE"/>
    <property type="match status" value="1"/>
</dbReference>
<dbReference type="PANTHER" id="PTHR30612">
    <property type="entry name" value="SECA INNER MEMBRANE COMPONENT OF SEC PROTEIN SECRETION SYSTEM"/>
    <property type="match status" value="1"/>
</dbReference>
<dbReference type="Pfam" id="PF21090">
    <property type="entry name" value="P-loop_SecA"/>
    <property type="match status" value="2"/>
</dbReference>
<dbReference type="Pfam" id="PF07517">
    <property type="entry name" value="SecA_DEAD"/>
    <property type="match status" value="1"/>
</dbReference>
<dbReference type="Pfam" id="PF01043">
    <property type="entry name" value="SecA_PP_bind"/>
    <property type="match status" value="1"/>
</dbReference>
<dbReference type="Pfam" id="PF07516">
    <property type="entry name" value="SecA_SW"/>
    <property type="match status" value="1"/>
</dbReference>
<dbReference type="PRINTS" id="PR00906">
    <property type="entry name" value="SECA"/>
</dbReference>
<dbReference type="SMART" id="SM00957">
    <property type="entry name" value="SecA_DEAD"/>
    <property type="match status" value="1"/>
</dbReference>
<dbReference type="SMART" id="SM00958">
    <property type="entry name" value="SecA_PP_bind"/>
    <property type="match status" value="1"/>
</dbReference>
<dbReference type="SUPFAM" id="SSF81886">
    <property type="entry name" value="Helical scaffold and wing domains of SecA"/>
    <property type="match status" value="1"/>
</dbReference>
<dbReference type="SUPFAM" id="SSF52540">
    <property type="entry name" value="P-loop containing nucleoside triphosphate hydrolases"/>
    <property type="match status" value="2"/>
</dbReference>
<dbReference type="SUPFAM" id="SSF81767">
    <property type="entry name" value="Pre-protein crosslinking domain of SecA"/>
    <property type="match status" value="1"/>
</dbReference>
<dbReference type="PROSITE" id="PS01312">
    <property type="entry name" value="SECA"/>
    <property type="match status" value="1"/>
</dbReference>
<dbReference type="PROSITE" id="PS51196">
    <property type="entry name" value="SECA_MOTOR_DEAD"/>
    <property type="match status" value="1"/>
</dbReference>
<organism>
    <name type="scientific">Mycobacterium sp. (strain JLS)</name>
    <dbReference type="NCBI Taxonomy" id="164757"/>
    <lineage>
        <taxon>Bacteria</taxon>
        <taxon>Bacillati</taxon>
        <taxon>Actinomycetota</taxon>
        <taxon>Actinomycetes</taxon>
        <taxon>Mycobacteriales</taxon>
        <taxon>Mycobacteriaceae</taxon>
        <taxon>Mycobacterium</taxon>
    </lineage>
</organism>
<proteinExistence type="inferred from homology"/>
<name>SECA2_MYCSJ</name>
<feature type="chain" id="PRO_0000318383" description="Protein translocase subunit SecA 2">
    <location>
        <begin position="1"/>
        <end position="774"/>
    </location>
</feature>
<feature type="binding site" evidence="1">
    <location>
        <position position="94"/>
    </location>
    <ligand>
        <name>ATP</name>
        <dbReference type="ChEBI" id="CHEBI:30616"/>
    </ligand>
</feature>
<feature type="binding site" evidence="1">
    <location>
        <begin position="112"/>
        <end position="116"/>
    </location>
    <ligand>
        <name>ATP</name>
        <dbReference type="ChEBI" id="CHEBI:30616"/>
    </ligand>
</feature>
<feature type="binding site" evidence="1">
    <location>
        <position position="501"/>
    </location>
    <ligand>
        <name>ATP</name>
        <dbReference type="ChEBI" id="CHEBI:30616"/>
    </ligand>
</feature>
<gene>
    <name evidence="1" type="primary">secA2</name>
    <name type="ordered locus">Mjls_2881</name>
</gene>
<reference key="1">
    <citation type="submission" date="2007-02" db="EMBL/GenBank/DDBJ databases">
        <title>Complete sequence of Mycobacterium sp. JLS.</title>
        <authorList>
            <consortium name="US DOE Joint Genome Institute"/>
            <person name="Copeland A."/>
            <person name="Lucas S."/>
            <person name="Lapidus A."/>
            <person name="Barry K."/>
            <person name="Detter J.C."/>
            <person name="Glavina del Rio T."/>
            <person name="Hammon N."/>
            <person name="Israni S."/>
            <person name="Dalin E."/>
            <person name="Tice H."/>
            <person name="Pitluck S."/>
            <person name="Chain P."/>
            <person name="Malfatti S."/>
            <person name="Shin M."/>
            <person name="Vergez L."/>
            <person name="Schmutz J."/>
            <person name="Larimer F."/>
            <person name="Land M."/>
            <person name="Hauser L."/>
            <person name="Kyrpides N."/>
            <person name="Mikhailova N."/>
            <person name="Miller C.D."/>
            <person name="Anderson A.J."/>
            <person name="Sims R.C."/>
            <person name="Richardson P."/>
        </authorList>
    </citation>
    <scope>NUCLEOTIDE SEQUENCE [LARGE SCALE GENOMIC DNA]</scope>
    <source>
        <strain>JLS</strain>
    </source>
</reference>
<comment type="function">
    <text evidence="1">Part of the Sec protein translocase complex. Interacts with the SecYEG preprotein conducting channel. Has a central role in coupling the hydrolysis of ATP to the transfer of proteins into and across the cell membrane, serving as an ATP-driven molecular motor driving the stepwise translocation of polypeptide chains across the membrane.</text>
</comment>
<comment type="catalytic activity">
    <reaction evidence="1">
        <text>ATP + H2O + cellular proteinSide 1 = ADP + phosphate + cellular proteinSide 2.</text>
        <dbReference type="EC" id="7.4.2.8"/>
    </reaction>
</comment>
<comment type="subunit">
    <text evidence="1">Monomer and homodimer. Part of the essential Sec protein translocation apparatus which comprises SecA, SecYEG and auxiliary proteins SecDF. Other proteins may also be involved.</text>
</comment>
<comment type="subcellular location">
    <subcellularLocation>
        <location evidence="1">Cell membrane</location>
        <topology evidence="1">Peripheral membrane protein</topology>
        <orientation evidence="1">Cytoplasmic side</orientation>
    </subcellularLocation>
    <subcellularLocation>
        <location evidence="1">Cytoplasm</location>
    </subcellularLocation>
    <text evidence="1">Distribution is 50-50.</text>
</comment>
<comment type="similarity">
    <text evidence="1">Belongs to the SecA family.</text>
</comment>
<accession>A3Q0I3</accession>
<sequence length="774" mass="84854">MPKTTTRTPGRLSGKFWKLLGAATEKNQGRSLAQVKASADYETKAADLDDEQLRKAAELLRLEDLSESADIPQFLAIAREAAERSTSLRPFDVQLLGALRMLAGDVVEMATGEGKTLSGAIAAAGYALGGRSVHVITINDYLARRDAEWMGPLIEALGLTVGWITAESTAEERRRAYTCDVTYASVNEIGFDVLRDQLVTDVADLVSPNPDVALIDEADSVLVDEALVPLVLAGTSHRETPRVELIRMVGELTPGRDFDTDTDSRNVHLTDEGARKLEAKLGGIDLYSEEHVGTTLTEVNVALHAHVLLQRDVHYIVRDDAVHLINSSRGRIAQLQRWPDGLQAAVEAKEGIATTETGEVLDTITVQALINRYPTVCGMTGTALAAGEQLRQFYKLGVSPIEPNKPNIREDESDRVYVTAAAKIDAIIEHIEEVHKTGQPVLVGTHDVAESEELHEKLVKRGVPAVVLNAKNDAEEARVIAEAGKLGAVTVSTQMAGRGTDIRLGGSDEGDHDEVAELGGLHVVGTGRHNTQRLDNQLRGRAGRQGDPGSSVFFSSWEDELVQAHLEPNKRPMQADENGRVLTDKAAALLDHAQRVAEGRLLDVHANTWRYNQLTAQQRAIIVERRDALLRTPTAREELAELSPKRYAELAEELSEERLERICRLIMLYHLDRGWCEHLAYLADIRESIHLRALGRQNPLDEFHRMAVDAFASLAADAIEAAQQTFETAPSFEDEPGVDLSKLARPTSTWTYMVHDNPLADDTMAALSLPGVFR</sequence>
<evidence type="ECO:0000255" key="1">
    <source>
        <dbReference type="HAMAP-Rule" id="MF_01382"/>
    </source>
</evidence>
<protein>
    <recommendedName>
        <fullName evidence="1">Protein translocase subunit SecA 2</fullName>
        <ecNumber evidence="1">7.4.2.8</ecNumber>
    </recommendedName>
</protein>